<feature type="chain" id="PRO_1000093841" description="Translation initiation factor IF-2">
    <location>
        <begin position="1"/>
        <end position="752"/>
    </location>
</feature>
<feature type="domain" description="tr-type G">
    <location>
        <begin position="250"/>
        <end position="419"/>
    </location>
</feature>
<feature type="region of interest" description="Disordered" evidence="3">
    <location>
        <begin position="148"/>
        <end position="170"/>
    </location>
</feature>
<feature type="region of interest" description="G1" evidence="1">
    <location>
        <begin position="259"/>
        <end position="266"/>
    </location>
</feature>
<feature type="region of interest" description="G2" evidence="1">
    <location>
        <begin position="284"/>
        <end position="288"/>
    </location>
</feature>
<feature type="region of interest" description="G3" evidence="1">
    <location>
        <begin position="305"/>
        <end position="308"/>
    </location>
</feature>
<feature type="region of interest" description="G4" evidence="1">
    <location>
        <begin position="359"/>
        <end position="362"/>
    </location>
</feature>
<feature type="region of interest" description="G5" evidence="1">
    <location>
        <begin position="395"/>
        <end position="397"/>
    </location>
</feature>
<feature type="compositionally biased region" description="Basic and acidic residues" evidence="3">
    <location>
        <begin position="148"/>
        <end position="159"/>
    </location>
</feature>
<feature type="binding site" evidence="2">
    <location>
        <begin position="259"/>
        <end position="266"/>
    </location>
    <ligand>
        <name>GTP</name>
        <dbReference type="ChEBI" id="CHEBI:37565"/>
    </ligand>
</feature>
<feature type="binding site" evidence="2">
    <location>
        <begin position="305"/>
        <end position="309"/>
    </location>
    <ligand>
        <name>GTP</name>
        <dbReference type="ChEBI" id="CHEBI:37565"/>
    </ligand>
</feature>
<feature type="binding site" evidence="2">
    <location>
        <begin position="359"/>
        <end position="362"/>
    </location>
    <ligand>
        <name>GTP</name>
        <dbReference type="ChEBI" id="CHEBI:37565"/>
    </ligand>
</feature>
<keyword id="KW-0963">Cytoplasm</keyword>
<keyword id="KW-0342">GTP-binding</keyword>
<keyword id="KW-0396">Initiation factor</keyword>
<keyword id="KW-0547">Nucleotide-binding</keyword>
<keyword id="KW-0648">Protein biosynthesis</keyword>
<keyword id="KW-1185">Reference proteome</keyword>
<dbReference type="EMBL" id="CP001147">
    <property type="protein sequence ID" value="ACI21413.1"/>
    <property type="molecule type" value="Genomic_DNA"/>
</dbReference>
<dbReference type="RefSeq" id="WP_012546130.1">
    <property type="nucleotide sequence ID" value="NC_011296.1"/>
</dbReference>
<dbReference type="RefSeq" id="YP_002249674.1">
    <property type="nucleotide sequence ID" value="NC_011296.1"/>
</dbReference>
<dbReference type="SMR" id="B5YHT8"/>
<dbReference type="FunCoup" id="B5YHT8">
    <property type="interactions" value="484"/>
</dbReference>
<dbReference type="STRING" id="289376.THEYE_A1884"/>
<dbReference type="EnsemblBacteria" id="ACI21413">
    <property type="protein sequence ID" value="ACI21413"/>
    <property type="gene ID" value="THEYE_A1884"/>
</dbReference>
<dbReference type="KEGG" id="tye:THEYE_A1884"/>
<dbReference type="PATRIC" id="fig|289376.4.peg.1840"/>
<dbReference type="eggNOG" id="COG0532">
    <property type="taxonomic scope" value="Bacteria"/>
</dbReference>
<dbReference type="HOGENOM" id="CLU_006301_5_1_0"/>
<dbReference type="InParanoid" id="B5YHT8"/>
<dbReference type="OrthoDB" id="9811804at2"/>
<dbReference type="Proteomes" id="UP000000718">
    <property type="component" value="Chromosome"/>
</dbReference>
<dbReference type="GO" id="GO:0005737">
    <property type="term" value="C:cytoplasm"/>
    <property type="evidence" value="ECO:0000318"/>
    <property type="project" value="GO_Central"/>
</dbReference>
<dbReference type="GO" id="GO:0005829">
    <property type="term" value="C:cytosol"/>
    <property type="evidence" value="ECO:0000318"/>
    <property type="project" value="GO_Central"/>
</dbReference>
<dbReference type="GO" id="GO:0005525">
    <property type="term" value="F:GTP binding"/>
    <property type="evidence" value="ECO:0007669"/>
    <property type="project" value="UniProtKB-KW"/>
</dbReference>
<dbReference type="GO" id="GO:0003924">
    <property type="term" value="F:GTPase activity"/>
    <property type="evidence" value="ECO:0007669"/>
    <property type="project" value="UniProtKB-UniRule"/>
</dbReference>
<dbReference type="GO" id="GO:0003743">
    <property type="term" value="F:translation initiation factor activity"/>
    <property type="evidence" value="ECO:0000318"/>
    <property type="project" value="GO_Central"/>
</dbReference>
<dbReference type="GO" id="GO:0006413">
    <property type="term" value="P:translational initiation"/>
    <property type="evidence" value="ECO:0000318"/>
    <property type="project" value="GO_Central"/>
</dbReference>
<dbReference type="CDD" id="cd01887">
    <property type="entry name" value="IF2_eIF5B"/>
    <property type="match status" value="1"/>
</dbReference>
<dbReference type="CDD" id="cd03702">
    <property type="entry name" value="IF2_mtIF2_II"/>
    <property type="match status" value="1"/>
</dbReference>
<dbReference type="CDD" id="cd03692">
    <property type="entry name" value="mtIF2_IVc"/>
    <property type="match status" value="1"/>
</dbReference>
<dbReference type="FunFam" id="2.40.30.10:FF:000007">
    <property type="entry name" value="Translation initiation factor IF-2"/>
    <property type="match status" value="1"/>
</dbReference>
<dbReference type="FunFam" id="2.40.30.10:FF:000008">
    <property type="entry name" value="Translation initiation factor IF-2"/>
    <property type="match status" value="1"/>
</dbReference>
<dbReference type="FunFam" id="3.40.50.10050:FF:000001">
    <property type="entry name" value="Translation initiation factor IF-2"/>
    <property type="match status" value="1"/>
</dbReference>
<dbReference type="FunFam" id="3.40.50.300:FF:000019">
    <property type="entry name" value="Translation initiation factor IF-2"/>
    <property type="match status" value="1"/>
</dbReference>
<dbReference type="Gene3D" id="3.40.50.300">
    <property type="entry name" value="P-loop containing nucleotide triphosphate hydrolases"/>
    <property type="match status" value="1"/>
</dbReference>
<dbReference type="Gene3D" id="2.40.30.10">
    <property type="entry name" value="Translation factors"/>
    <property type="match status" value="2"/>
</dbReference>
<dbReference type="Gene3D" id="3.40.50.10050">
    <property type="entry name" value="Translation initiation factor IF- 2, domain 3"/>
    <property type="match status" value="1"/>
</dbReference>
<dbReference type="HAMAP" id="MF_00100_B">
    <property type="entry name" value="IF_2_B"/>
    <property type="match status" value="1"/>
</dbReference>
<dbReference type="InterPro" id="IPR053905">
    <property type="entry name" value="EF-G-like_DII"/>
</dbReference>
<dbReference type="InterPro" id="IPR004161">
    <property type="entry name" value="EFTu-like_2"/>
</dbReference>
<dbReference type="InterPro" id="IPR044145">
    <property type="entry name" value="IF2_II"/>
</dbReference>
<dbReference type="InterPro" id="IPR006847">
    <property type="entry name" value="IF2_N"/>
</dbReference>
<dbReference type="InterPro" id="IPR027417">
    <property type="entry name" value="P-loop_NTPase"/>
</dbReference>
<dbReference type="InterPro" id="IPR005225">
    <property type="entry name" value="Small_GTP-bd"/>
</dbReference>
<dbReference type="InterPro" id="IPR000795">
    <property type="entry name" value="T_Tr_GTP-bd_dom"/>
</dbReference>
<dbReference type="InterPro" id="IPR000178">
    <property type="entry name" value="TF_IF2_bacterial-like"/>
</dbReference>
<dbReference type="InterPro" id="IPR015760">
    <property type="entry name" value="TIF_IF2"/>
</dbReference>
<dbReference type="InterPro" id="IPR023115">
    <property type="entry name" value="TIF_IF2_dom3"/>
</dbReference>
<dbReference type="InterPro" id="IPR036925">
    <property type="entry name" value="TIF_IF2_dom3_sf"/>
</dbReference>
<dbReference type="InterPro" id="IPR009000">
    <property type="entry name" value="Transl_B-barrel_sf"/>
</dbReference>
<dbReference type="NCBIfam" id="TIGR00487">
    <property type="entry name" value="IF-2"/>
    <property type="match status" value="1"/>
</dbReference>
<dbReference type="NCBIfam" id="TIGR00231">
    <property type="entry name" value="small_GTP"/>
    <property type="match status" value="1"/>
</dbReference>
<dbReference type="PANTHER" id="PTHR43381:SF5">
    <property type="entry name" value="TR-TYPE G DOMAIN-CONTAINING PROTEIN"/>
    <property type="match status" value="1"/>
</dbReference>
<dbReference type="PANTHER" id="PTHR43381">
    <property type="entry name" value="TRANSLATION INITIATION FACTOR IF-2-RELATED"/>
    <property type="match status" value="1"/>
</dbReference>
<dbReference type="Pfam" id="PF22042">
    <property type="entry name" value="EF-G_D2"/>
    <property type="match status" value="1"/>
</dbReference>
<dbReference type="Pfam" id="PF00009">
    <property type="entry name" value="GTP_EFTU"/>
    <property type="match status" value="1"/>
</dbReference>
<dbReference type="Pfam" id="PF03144">
    <property type="entry name" value="GTP_EFTU_D2"/>
    <property type="match status" value="1"/>
</dbReference>
<dbReference type="Pfam" id="PF11987">
    <property type="entry name" value="IF-2"/>
    <property type="match status" value="1"/>
</dbReference>
<dbReference type="Pfam" id="PF04760">
    <property type="entry name" value="IF2_N"/>
    <property type="match status" value="1"/>
</dbReference>
<dbReference type="SUPFAM" id="SSF52156">
    <property type="entry name" value="Initiation factor IF2/eIF5b, domain 3"/>
    <property type="match status" value="1"/>
</dbReference>
<dbReference type="SUPFAM" id="SSF52540">
    <property type="entry name" value="P-loop containing nucleoside triphosphate hydrolases"/>
    <property type="match status" value="1"/>
</dbReference>
<dbReference type="SUPFAM" id="SSF50447">
    <property type="entry name" value="Translation proteins"/>
    <property type="match status" value="2"/>
</dbReference>
<dbReference type="PROSITE" id="PS51722">
    <property type="entry name" value="G_TR_2"/>
    <property type="match status" value="1"/>
</dbReference>
<dbReference type="PROSITE" id="PS01176">
    <property type="entry name" value="IF2"/>
    <property type="match status" value="1"/>
</dbReference>
<comment type="function">
    <text evidence="2">One of the essential components for the initiation of protein synthesis. Protects formylmethionyl-tRNA from spontaneous hydrolysis and promotes its binding to the 30S ribosomal subunits. Also involved in the hydrolysis of GTP during the formation of the 70S ribosomal complex.</text>
</comment>
<comment type="subcellular location">
    <subcellularLocation>
        <location evidence="2">Cytoplasm</location>
    </subcellularLocation>
</comment>
<comment type="similarity">
    <text evidence="2">Belongs to the TRAFAC class translation factor GTPase superfamily. Classic translation factor GTPase family. IF-2 subfamily.</text>
</comment>
<gene>
    <name evidence="2" type="primary">infB</name>
    <name type="ordered locus">THEYE_A1884</name>
</gene>
<proteinExistence type="inferred from homology"/>
<evidence type="ECO:0000250" key="1"/>
<evidence type="ECO:0000255" key="2">
    <source>
        <dbReference type="HAMAP-Rule" id="MF_00100"/>
    </source>
</evidence>
<evidence type="ECO:0000256" key="3">
    <source>
        <dbReference type="SAM" id="MobiDB-lite"/>
    </source>
</evidence>
<organism>
    <name type="scientific">Thermodesulfovibrio yellowstonii (strain ATCC 51303 / DSM 11347 / YP87)</name>
    <dbReference type="NCBI Taxonomy" id="289376"/>
    <lineage>
        <taxon>Bacteria</taxon>
        <taxon>Pseudomonadati</taxon>
        <taxon>Nitrospirota</taxon>
        <taxon>Thermodesulfovibrionia</taxon>
        <taxon>Thermodesulfovibrionales</taxon>
        <taxon>Thermodesulfovibrionaceae</taxon>
        <taxon>Thermodesulfovibrio</taxon>
    </lineage>
</organism>
<protein>
    <recommendedName>
        <fullName evidence="2">Translation initiation factor IF-2</fullName>
    </recommendedName>
</protein>
<reference key="1">
    <citation type="submission" date="2008-08" db="EMBL/GenBank/DDBJ databases">
        <title>The complete genome sequence of Thermodesulfovibrio yellowstonii strain ATCC 51303 / DSM 11347 / YP87.</title>
        <authorList>
            <person name="Dodson R.J."/>
            <person name="Durkin A.S."/>
            <person name="Wu M."/>
            <person name="Eisen J."/>
            <person name="Sutton G."/>
        </authorList>
    </citation>
    <scope>NUCLEOTIDE SEQUENCE [LARGE SCALE GENOMIC DNA]</scope>
    <source>
        <strain>ATCC 51303 / DSM 11347 / YP87</strain>
    </source>
</reference>
<sequence>MSTKAVRSIELARELGVKPLEIVKFIEKIRNIQFKKGTTNIKVEPDEIDKIIQHFKKEAKLEKIKEKEEKPVELKKTEEIKELEEKKPITPKIIEEEIKEEEELQLPGRFRREISFEKIEKIKPKPVPTKIPPKKFEPKKWLDIKEQKKVKDKNKKEEPAVTPSTAPRKKSIKIEEGTTVKEFAELIGQKVPDVIKKFMELGYMPTINQPVDIDAAQLVAESFGIKVEFSQTQELDIIEEVEDSPELLQPRPPIVTVMGHVDHGKTSLLDAIRKTKVTEQEAGGITQHIGAYKVTLQGKDITFLDTPGHEAFTALRARGAKVTDIVVLVVAADDGVMPQTIEAINHAKAANVPIVVAVNKIDKPEANPQRVRTQLSDYGVIPEEWGGQNIFVDISAKKRIGIENLLEMIALQAEIMELKANPNKPARGTIIESRLDKGRGPVATVIVQNGTLRIGDAFVAGVTYGKVRAIIDDTGKRINEAPPSTPVEVVGFEEVPQAGDSFTVVEDERIARQIANTRAQKKRLAEMQKAQRLTLQDLYEKIKEGEVKELNLVIKGDVQGSVEALKKAVEDITHPEIKVKVIHTGVGGITESDVNLAATANAIIIGFNVRPETKAQDLAEQLGVDIKLYSIIYEVIDDVKKALQGMLEPEIKERVIGRAEVRAVFKISKIGTVAGCYVLNGTISRASDGVRVIRDNIVVYEGKISSLKRFKEDVREVQAGYECGITIENFNDIKEGDILENYVLEKVPVKGL</sequence>
<name>IF2_THEYD</name>
<accession>B5YHT8</accession>